<proteinExistence type="evidence at transcript level"/>
<dbReference type="EMBL" id="AB086179">
    <property type="protein sequence ID" value="BAC55359.1"/>
    <property type="molecule type" value="Genomic_DNA"/>
</dbReference>
<dbReference type="EMBL" id="AB087451">
    <property type="protein sequence ID" value="BAC55455.1"/>
    <property type="molecule type" value="mRNA"/>
</dbReference>
<dbReference type="RefSeq" id="NP_777423.1">
    <property type="nucleotide sequence ID" value="NC_004543.1"/>
</dbReference>
<dbReference type="SMR" id="Q85CI4"/>
<dbReference type="GeneID" id="2553393"/>
<dbReference type="GO" id="GO:0009535">
    <property type="term" value="C:chloroplast thylakoid membrane"/>
    <property type="evidence" value="ECO:0007669"/>
    <property type="project" value="UniProtKB-SubCell"/>
</dbReference>
<dbReference type="GO" id="GO:0009522">
    <property type="term" value="C:photosystem I"/>
    <property type="evidence" value="ECO:0007669"/>
    <property type="project" value="UniProtKB-KW"/>
</dbReference>
<dbReference type="GO" id="GO:0015979">
    <property type="term" value="P:photosynthesis"/>
    <property type="evidence" value="ECO:0007669"/>
    <property type="project" value="UniProtKB-UniRule"/>
</dbReference>
<dbReference type="HAMAP" id="MF_00431">
    <property type="entry name" value="PSI_PsaI"/>
    <property type="match status" value="1"/>
</dbReference>
<dbReference type="InterPro" id="IPR001302">
    <property type="entry name" value="PSI_PsaI"/>
</dbReference>
<dbReference type="InterPro" id="IPR036357">
    <property type="entry name" value="PSI_PsaI_sf"/>
</dbReference>
<dbReference type="NCBIfam" id="NF008830">
    <property type="entry name" value="PRK11877.1"/>
    <property type="match status" value="1"/>
</dbReference>
<dbReference type="NCBIfam" id="TIGR03052">
    <property type="entry name" value="PS_I_psaI"/>
    <property type="match status" value="1"/>
</dbReference>
<dbReference type="PANTHER" id="PTHR35775">
    <property type="match status" value="1"/>
</dbReference>
<dbReference type="PANTHER" id="PTHR35775:SF2">
    <property type="entry name" value="PHOTOSYSTEM I REACTION CENTER SUBUNIT VIII"/>
    <property type="match status" value="1"/>
</dbReference>
<dbReference type="Pfam" id="PF00796">
    <property type="entry name" value="PSI_8"/>
    <property type="match status" value="1"/>
</dbReference>
<dbReference type="SUPFAM" id="SSF81540">
    <property type="entry name" value="Subunit VIII of photosystem I reaction centre, PsaI"/>
    <property type="match status" value="1"/>
</dbReference>
<accession>Q85CI4</accession>
<comment type="function">
    <text evidence="1">May help in the organization of the PsaL subunit.</text>
</comment>
<comment type="subcellular location">
    <subcellularLocation>
        <location evidence="1">Plastid</location>
        <location evidence="1">Chloroplast thylakoid membrane</location>
        <topology evidence="1">Single-pass membrane protein</topology>
    </subcellularLocation>
</comment>
<comment type="similarity">
    <text evidence="1">Belongs to the PsaI family.</text>
</comment>
<gene>
    <name evidence="1" type="primary">psaI</name>
</gene>
<evidence type="ECO:0000255" key="1">
    <source>
        <dbReference type="HAMAP-Rule" id="MF_00431"/>
    </source>
</evidence>
<keyword id="KW-0150">Chloroplast</keyword>
<keyword id="KW-0472">Membrane</keyword>
<keyword id="KW-0602">Photosynthesis</keyword>
<keyword id="KW-0603">Photosystem I</keyword>
<keyword id="KW-0934">Plastid</keyword>
<keyword id="KW-0793">Thylakoid</keyword>
<keyword id="KW-0812">Transmembrane</keyword>
<keyword id="KW-1133">Transmembrane helix</keyword>
<sequence length="36" mass="3938">MTASYLPSILVPLVGLVFPAITLASLFIYIEQDEIV</sequence>
<organism>
    <name type="scientific">Anthoceros angustus</name>
    <name type="common">Hornwort</name>
    <name type="synonym">Anthoceros formosae</name>
    <dbReference type="NCBI Taxonomy" id="48387"/>
    <lineage>
        <taxon>Eukaryota</taxon>
        <taxon>Viridiplantae</taxon>
        <taxon>Streptophyta</taxon>
        <taxon>Embryophyta</taxon>
        <taxon>Anthocerotophyta</taxon>
        <taxon>Anthocerotopsida</taxon>
        <taxon>Anthocerotidae</taxon>
        <taxon>Anthocerotales</taxon>
        <taxon>Anthocerotaceae</taxon>
        <taxon>Anthoceros</taxon>
    </lineage>
</organism>
<protein>
    <recommendedName>
        <fullName evidence="1">Photosystem I reaction center subunit VIII</fullName>
        <shortName evidence="1">PSI-I</shortName>
    </recommendedName>
</protein>
<geneLocation type="chloroplast"/>
<reference key="1">
    <citation type="journal article" date="2003" name="Nucleic Acids Res.">
        <title>The complete nucleotide sequence of the hornwort (Anthoceros formosae) chloroplast genome: insight into the earliest land plants.</title>
        <authorList>
            <person name="Kugita M."/>
            <person name="Kaneko A."/>
            <person name="Yamamoto Y."/>
            <person name="Takeya Y."/>
            <person name="Matsumoto T."/>
            <person name="Yoshinaga K."/>
        </authorList>
    </citation>
    <scope>NUCLEOTIDE SEQUENCE [LARGE SCALE GENOMIC DNA]</scope>
</reference>
<reference key="2">
    <citation type="journal article" date="2003" name="Nucleic Acids Res.">
        <title>RNA editing in hornwort chloroplasts makes more than half the genes functional.</title>
        <authorList>
            <person name="Kugita M."/>
            <person name="Yamamoto Y."/>
            <person name="Fujikawa T."/>
            <person name="Matsumoto T."/>
            <person name="Yoshinaga K."/>
        </authorList>
    </citation>
    <scope>NUCLEOTIDE SEQUENCE [MRNA]</scope>
    <scope>ABSENCE OF RNA EDITING</scope>
    <source>
        <tissue>Thallus</tissue>
    </source>
</reference>
<feature type="chain" id="PRO_0000194642" description="Photosystem I reaction center subunit VIII">
    <location>
        <begin position="1"/>
        <end position="36"/>
    </location>
</feature>
<feature type="transmembrane region" description="Helical" evidence="1">
    <location>
        <begin position="7"/>
        <end position="29"/>
    </location>
</feature>
<name>PSAI_ANTAG</name>